<dbReference type="EMBL" id="AE003852">
    <property type="protein sequence ID" value="AAF93227.1"/>
    <property type="molecule type" value="Genomic_DNA"/>
</dbReference>
<dbReference type="PIR" id="H82369">
    <property type="entry name" value="H82369"/>
</dbReference>
<dbReference type="RefSeq" id="NP_229708.1">
    <property type="nucleotide sequence ID" value="NC_002505.1"/>
</dbReference>
<dbReference type="RefSeq" id="WP_000979769.1">
    <property type="nucleotide sequence ID" value="NZ_LT906614.1"/>
</dbReference>
<dbReference type="SMR" id="Q9KVU0"/>
<dbReference type="STRING" id="243277.VC_0049"/>
<dbReference type="DNASU" id="2614416"/>
<dbReference type="EnsemblBacteria" id="AAF93227">
    <property type="protein sequence ID" value="AAF93227"/>
    <property type="gene ID" value="VC_0049"/>
</dbReference>
<dbReference type="KEGG" id="vch:VC_0049"/>
<dbReference type="PATRIC" id="fig|243277.26.peg.48"/>
<dbReference type="eggNOG" id="COG2922">
    <property type="taxonomic scope" value="Bacteria"/>
</dbReference>
<dbReference type="HOGENOM" id="CLU_133242_0_0_6"/>
<dbReference type="Proteomes" id="UP000000584">
    <property type="component" value="Chromosome 1"/>
</dbReference>
<dbReference type="HAMAP" id="MF_00598">
    <property type="entry name" value="Smg"/>
    <property type="match status" value="1"/>
</dbReference>
<dbReference type="InterPro" id="IPR007456">
    <property type="entry name" value="Smg"/>
</dbReference>
<dbReference type="NCBIfam" id="NF002897">
    <property type="entry name" value="PRK03430.1"/>
    <property type="match status" value="1"/>
</dbReference>
<dbReference type="PANTHER" id="PTHR38692">
    <property type="entry name" value="PROTEIN SMG"/>
    <property type="match status" value="1"/>
</dbReference>
<dbReference type="PANTHER" id="PTHR38692:SF1">
    <property type="entry name" value="PROTEIN SMG"/>
    <property type="match status" value="1"/>
</dbReference>
<dbReference type="Pfam" id="PF04361">
    <property type="entry name" value="DUF494"/>
    <property type="match status" value="1"/>
</dbReference>
<reference key="1">
    <citation type="journal article" date="2000" name="Nature">
        <title>DNA sequence of both chromosomes of the cholera pathogen Vibrio cholerae.</title>
        <authorList>
            <person name="Heidelberg J.F."/>
            <person name="Eisen J.A."/>
            <person name="Nelson W.C."/>
            <person name="Clayton R.A."/>
            <person name="Gwinn M.L."/>
            <person name="Dodson R.J."/>
            <person name="Haft D.H."/>
            <person name="Hickey E.K."/>
            <person name="Peterson J.D."/>
            <person name="Umayam L.A."/>
            <person name="Gill S.R."/>
            <person name="Nelson K.E."/>
            <person name="Read T.D."/>
            <person name="Tettelin H."/>
            <person name="Richardson D.L."/>
            <person name="Ermolaeva M.D."/>
            <person name="Vamathevan J.J."/>
            <person name="Bass S."/>
            <person name="Qin H."/>
            <person name="Dragoi I."/>
            <person name="Sellers P."/>
            <person name="McDonald L.A."/>
            <person name="Utterback T.R."/>
            <person name="Fleischmann R.D."/>
            <person name="Nierman W.C."/>
            <person name="White O."/>
            <person name="Salzberg S.L."/>
            <person name="Smith H.O."/>
            <person name="Colwell R.R."/>
            <person name="Mekalanos J.J."/>
            <person name="Venter J.C."/>
            <person name="Fraser C.M."/>
        </authorList>
    </citation>
    <scope>NUCLEOTIDE SEQUENCE [LARGE SCALE GENOMIC DNA]</scope>
    <source>
        <strain>ATCC 39315 / El Tor Inaba N16961</strain>
    </source>
</reference>
<comment type="similarity">
    <text evidence="1">Belongs to the Smg family.</text>
</comment>
<accession>Q9KVU0</accession>
<name>SMG_VIBCH</name>
<proteinExistence type="inferred from homology"/>
<gene>
    <name evidence="1" type="primary">smg</name>
    <name type="ordered locus">VC_0049</name>
</gene>
<evidence type="ECO:0000255" key="1">
    <source>
        <dbReference type="HAMAP-Rule" id="MF_00598"/>
    </source>
</evidence>
<feature type="chain" id="PRO_0000209183" description="Protein Smg homolog">
    <location>
        <begin position="1"/>
        <end position="158"/>
    </location>
</feature>
<keyword id="KW-1185">Reference proteome</keyword>
<sequence>MMMDILMYLFETYVHSDADLQVDQDQLEDELLRAGFHQKDIYKALHWLEELAALQQTDAQTAIAKSAPTSMRIYAPEEIERLDLESRGFLLFLEHINVLTPETREMVIDRVMGLETDEFELDDLKWIILMVLFNVPGNENAYTVMEELLYSKEQGILH</sequence>
<protein>
    <recommendedName>
        <fullName evidence="1">Protein Smg homolog</fullName>
    </recommendedName>
</protein>
<organism>
    <name type="scientific">Vibrio cholerae serotype O1 (strain ATCC 39315 / El Tor Inaba N16961)</name>
    <dbReference type="NCBI Taxonomy" id="243277"/>
    <lineage>
        <taxon>Bacteria</taxon>
        <taxon>Pseudomonadati</taxon>
        <taxon>Pseudomonadota</taxon>
        <taxon>Gammaproteobacteria</taxon>
        <taxon>Vibrionales</taxon>
        <taxon>Vibrionaceae</taxon>
        <taxon>Vibrio</taxon>
    </lineage>
</organism>